<accession>Q65N90</accession>
<accession>Q62YP4</accession>
<protein>
    <recommendedName>
        <fullName evidence="1">DNA topoisomerase 3</fullName>
        <ecNumber evidence="1">5.6.2.1</ecNumber>
    </recommendedName>
    <alternativeName>
        <fullName evidence="1">DNA topoisomerase III</fullName>
    </alternativeName>
</protein>
<sequence>MSKTVVLAEKPSVGRDLARVLKCHKKGNGYLEGDRYIVTWALGHLVTLADPEGYGKEYQSWRLEDLPIIPEPLKLVVIKKTGKQFQAVKSQLIRKDVKDIVIATDAGREGELVARWIIEKAKVTKPLKRLWISSVTDKAIKDGFKNLKNGKDFENLYHSAVARAEADWIVGINATRALTTKFNAQLSCGRVQTPTLAMIAKREEDIKNFKPVPYFGLRAAVDGMTLTWQDKKTSQTRTFNASVTSQLAGALQGKPAVIVDLKKTAKKSFAPGLYDLTELQRDAHKRFGFSAKETLSVLQKLYEQHKLVTYPRTDSRFLSNDIVPTLKDRLEGMQVKPYAQHVARILKRGVKANKSFVNDAKVSDHHAIIPTEEPLALGALSEKERKLYDLIAKRFLAVLMPPFEYEETKVFAEIGGETFTAKGKTVQSQGWKAVYDFADEDDDEEEKDQTLPKLAKGDTLSVRSLTETKGETKPPARFNEGTLLSAMENPAAFMQGEEKNLVKTLGETGGLGTVATRADIIEKLFNTFLIEKKGKDIYITSKGKQLLELVPSDLKSPALTAEWEQKLSGIAKGKLKSSAFIKEMKEYAKQTIREIKSSNQKFKHDNITGTHCPDCGKLMLKVNGKRGTMLVCQDRECGHRKTVAKQTNARCPVCHKRMELRGHGEGQTFACVCGHREKLSVFEKRRAKDKNSKASKRDVHSYMKKQNKDEPINNALAEQLKKLKLDQ</sequence>
<evidence type="ECO:0000255" key="1">
    <source>
        <dbReference type="HAMAP-Rule" id="MF_00953"/>
    </source>
</evidence>
<evidence type="ECO:0000255" key="2">
    <source>
        <dbReference type="PROSITE-ProRule" id="PRU01383"/>
    </source>
</evidence>
<evidence type="ECO:0000256" key="3">
    <source>
        <dbReference type="SAM" id="MobiDB-lite"/>
    </source>
</evidence>
<evidence type="ECO:0000305" key="4"/>
<feature type="chain" id="PRO_0000286364" description="DNA topoisomerase 3">
    <location>
        <begin position="1"/>
        <end position="727"/>
    </location>
</feature>
<feature type="domain" description="Toprim" evidence="1">
    <location>
        <begin position="3"/>
        <end position="136"/>
    </location>
</feature>
<feature type="domain" description="Topo IA-type catalytic" evidence="2">
    <location>
        <begin position="153"/>
        <end position="592"/>
    </location>
</feature>
<feature type="region of interest" description="Interaction with DNA" evidence="1">
    <location>
        <begin position="187"/>
        <end position="192"/>
    </location>
</feature>
<feature type="region of interest" description="Disordered" evidence="3">
    <location>
        <begin position="685"/>
        <end position="713"/>
    </location>
</feature>
<feature type="compositionally biased region" description="Basic and acidic residues" evidence="3">
    <location>
        <begin position="685"/>
        <end position="711"/>
    </location>
</feature>
<feature type="active site" description="O-(5'-phospho-DNA)-tyrosine intermediate" evidence="2">
    <location>
        <position position="310"/>
    </location>
</feature>
<feature type="binding site" evidence="1">
    <location>
        <position position="9"/>
    </location>
    <ligand>
        <name>Mg(2+)</name>
        <dbReference type="ChEBI" id="CHEBI:18420"/>
        <note>catalytic</note>
    </ligand>
</feature>
<feature type="binding site" evidence="1">
    <location>
        <position position="105"/>
    </location>
    <ligand>
        <name>Mg(2+)</name>
        <dbReference type="ChEBI" id="CHEBI:18420"/>
        <note>catalytic</note>
    </ligand>
</feature>
<feature type="site" description="Interaction with DNA" evidence="1">
    <location>
        <position position="61"/>
    </location>
</feature>
<feature type="site" description="Interaction with DNA" evidence="1">
    <location>
        <position position="168"/>
    </location>
</feature>
<feature type="site" description="Interaction with DNA" evidence="1">
    <location>
        <position position="176"/>
    </location>
</feature>
<feature type="site" description="Interaction with DNA" evidence="1">
    <location>
        <position position="312"/>
    </location>
</feature>
<comment type="function">
    <text evidence="1">Releases the supercoiling and torsional tension of DNA, which is introduced during the DNA replication and transcription, by transiently cleaving and rejoining one strand of the DNA duplex. Introduces a single-strand break via transesterification at a target site in duplex DNA. The scissile phosphodiester is attacked by the catalytic tyrosine of the enzyme, resulting in the formation of a DNA-(5'-phosphotyrosyl)-enzyme intermediate and the expulsion of a 3'-OH DNA strand. The free DNA strand then undergoes passage around the unbroken strand, thus removing DNA supercoils. Finally, in the religation step, the DNA 3'-OH attacks the covalent intermediate to expel the active-site tyrosine and restore the DNA phosphodiester backbone.</text>
</comment>
<comment type="catalytic activity">
    <reaction evidence="1">
        <text>ATP-independent breakage of single-stranded DNA, followed by passage and rejoining.</text>
        <dbReference type="EC" id="5.6.2.1"/>
    </reaction>
</comment>
<comment type="cofactor">
    <cofactor evidence="1">
        <name>Mg(2+)</name>
        <dbReference type="ChEBI" id="CHEBI:18420"/>
    </cofactor>
</comment>
<comment type="similarity">
    <text evidence="1 2">Belongs to the type IA topoisomerase family.</text>
</comment>
<comment type="sequence caution" evidence="4">
    <conflict type="erroneous initiation">
        <sequence resource="EMBL-CDS" id="AAU22114"/>
    </conflict>
</comment>
<comment type="sequence caution" evidence="4">
    <conflict type="erroneous initiation">
        <sequence resource="EMBL-CDS" id="AAU39474"/>
    </conflict>
</comment>
<proteinExistence type="inferred from homology"/>
<gene>
    <name evidence="1" type="primary">topB</name>
    <name type="ordered locus">BLi00518</name>
    <name type="ordered locus">BL02823</name>
</gene>
<reference key="1">
    <citation type="journal article" date="2004" name="J. Mol. Microbiol. Biotechnol.">
        <title>The complete genome sequence of Bacillus licheniformis DSM13, an organism with great industrial potential.</title>
        <authorList>
            <person name="Veith B."/>
            <person name="Herzberg C."/>
            <person name="Steckel S."/>
            <person name="Feesche J."/>
            <person name="Maurer K.H."/>
            <person name="Ehrenreich P."/>
            <person name="Baeumer S."/>
            <person name="Henne A."/>
            <person name="Liesegang H."/>
            <person name="Merkl R."/>
            <person name="Ehrenreich A."/>
            <person name="Gottschalk G."/>
        </authorList>
    </citation>
    <scope>NUCLEOTIDE SEQUENCE [LARGE SCALE GENOMIC DNA]</scope>
    <source>
        <strain>ATCC 14580 / DSM 13 / JCM 2505 / CCUG 7422 / NBRC 12200 / NCIMB 9375 / NCTC 10341 / NRRL NRS-1264 / Gibson 46</strain>
    </source>
</reference>
<reference key="2">
    <citation type="journal article" date="2004" name="Genome Biol.">
        <title>Complete genome sequence of the industrial bacterium Bacillus licheniformis and comparisons with closely related Bacillus species.</title>
        <authorList>
            <person name="Rey M.W."/>
            <person name="Ramaiya P."/>
            <person name="Nelson B.A."/>
            <person name="Brody-Karpin S.D."/>
            <person name="Zaretsky E.J."/>
            <person name="Tang M."/>
            <person name="Lopez de Leon A."/>
            <person name="Xiang H."/>
            <person name="Gusti V."/>
            <person name="Clausen I.G."/>
            <person name="Olsen P.B."/>
            <person name="Rasmussen M.D."/>
            <person name="Andersen J.T."/>
            <person name="Joergensen P.L."/>
            <person name="Larsen T.S."/>
            <person name="Sorokin A."/>
            <person name="Bolotin A."/>
            <person name="Lapidus A."/>
            <person name="Galleron N."/>
            <person name="Ehrlich S.D."/>
            <person name="Berka R.M."/>
        </authorList>
    </citation>
    <scope>NUCLEOTIDE SEQUENCE [LARGE SCALE GENOMIC DNA]</scope>
    <source>
        <strain>ATCC 14580 / DSM 13 / JCM 2505 / CCUG 7422 / NBRC 12200 / NCIMB 9375 / NCTC 10341 / NRRL NRS-1264 / Gibson 46</strain>
    </source>
</reference>
<dbReference type="EC" id="5.6.2.1" evidence="1"/>
<dbReference type="EMBL" id="AE017333">
    <property type="protein sequence ID" value="AAU39474.1"/>
    <property type="status" value="ALT_INIT"/>
    <property type="molecule type" value="Genomic_DNA"/>
</dbReference>
<dbReference type="EMBL" id="CP000002">
    <property type="protein sequence ID" value="AAU22114.2"/>
    <property type="status" value="ALT_INIT"/>
    <property type="molecule type" value="Genomic_DNA"/>
</dbReference>
<dbReference type="SMR" id="Q65N90"/>
<dbReference type="STRING" id="279010.BL02823"/>
<dbReference type="KEGG" id="bld:BLi00518"/>
<dbReference type="KEGG" id="bli:BL02823"/>
<dbReference type="eggNOG" id="COG0550">
    <property type="taxonomic scope" value="Bacteria"/>
</dbReference>
<dbReference type="eggNOG" id="COG0551">
    <property type="taxonomic scope" value="Bacteria"/>
</dbReference>
<dbReference type="HOGENOM" id="CLU_002929_5_2_9"/>
<dbReference type="Proteomes" id="UP000000606">
    <property type="component" value="Chromosome"/>
</dbReference>
<dbReference type="GO" id="GO:0043597">
    <property type="term" value="C:cytoplasmic replication fork"/>
    <property type="evidence" value="ECO:0007669"/>
    <property type="project" value="TreeGrafter"/>
</dbReference>
<dbReference type="GO" id="GO:0003677">
    <property type="term" value="F:DNA binding"/>
    <property type="evidence" value="ECO:0007669"/>
    <property type="project" value="UniProtKB-KW"/>
</dbReference>
<dbReference type="GO" id="GO:0003917">
    <property type="term" value="F:DNA topoisomerase type I (single strand cut, ATP-independent) activity"/>
    <property type="evidence" value="ECO:0007669"/>
    <property type="project" value="UniProtKB-UniRule"/>
</dbReference>
<dbReference type="GO" id="GO:0000287">
    <property type="term" value="F:magnesium ion binding"/>
    <property type="evidence" value="ECO:0007669"/>
    <property type="project" value="UniProtKB-UniRule"/>
</dbReference>
<dbReference type="GO" id="GO:0006310">
    <property type="term" value="P:DNA recombination"/>
    <property type="evidence" value="ECO:0007669"/>
    <property type="project" value="TreeGrafter"/>
</dbReference>
<dbReference type="GO" id="GO:0006281">
    <property type="term" value="P:DNA repair"/>
    <property type="evidence" value="ECO:0007669"/>
    <property type="project" value="TreeGrafter"/>
</dbReference>
<dbReference type="GO" id="GO:0006265">
    <property type="term" value="P:DNA topological change"/>
    <property type="evidence" value="ECO:0007669"/>
    <property type="project" value="UniProtKB-UniRule"/>
</dbReference>
<dbReference type="CDD" id="cd00186">
    <property type="entry name" value="TOP1Ac"/>
    <property type="match status" value="1"/>
</dbReference>
<dbReference type="CDD" id="cd03362">
    <property type="entry name" value="TOPRIM_TopoIA_TopoIII"/>
    <property type="match status" value="1"/>
</dbReference>
<dbReference type="Gene3D" id="3.40.50.140">
    <property type="match status" value="1"/>
</dbReference>
<dbReference type="Gene3D" id="1.10.460.10">
    <property type="entry name" value="Topoisomerase I, domain 2"/>
    <property type="match status" value="1"/>
</dbReference>
<dbReference type="Gene3D" id="2.70.20.10">
    <property type="entry name" value="Topoisomerase I, domain 3"/>
    <property type="match status" value="1"/>
</dbReference>
<dbReference type="Gene3D" id="1.10.290.10">
    <property type="entry name" value="Topoisomerase I, domain 4"/>
    <property type="match status" value="1"/>
</dbReference>
<dbReference type="HAMAP" id="MF_00953">
    <property type="entry name" value="Topoisom_3_prok"/>
    <property type="match status" value="1"/>
</dbReference>
<dbReference type="InterPro" id="IPR000380">
    <property type="entry name" value="Topo_IA"/>
</dbReference>
<dbReference type="InterPro" id="IPR003601">
    <property type="entry name" value="Topo_IA_2"/>
</dbReference>
<dbReference type="InterPro" id="IPR023406">
    <property type="entry name" value="Topo_IA_AS"/>
</dbReference>
<dbReference type="InterPro" id="IPR013497">
    <property type="entry name" value="Topo_IA_cen"/>
</dbReference>
<dbReference type="InterPro" id="IPR013824">
    <property type="entry name" value="Topo_IA_cen_sub1"/>
</dbReference>
<dbReference type="InterPro" id="IPR013825">
    <property type="entry name" value="Topo_IA_cen_sub2"/>
</dbReference>
<dbReference type="InterPro" id="IPR013826">
    <property type="entry name" value="Topo_IA_cen_sub3"/>
</dbReference>
<dbReference type="InterPro" id="IPR023405">
    <property type="entry name" value="Topo_IA_core_domain"/>
</dbReference>
<dbReference type="InterPro" id="IPR003602">
    <property type="entry name" value="Topo_IA_DNA-bd_dom"/>
</dbReference>
<dbReference type="InterPro" id="IPR005738">
    <property type="entry name" value="TopoIII"/>
</dbReference>
<dbReference type="InterPro" id="IPR006171">
    <property type="entry name" value="TOPRIM_dom"/>
</dbReference>
<dbReference type="InterPro" id="IPR034144">
    <property type="entry name" value="TOPRIM_TopoIII"/>
</dbReference>
<dbReference type="NCBIfam" id="NF005829">
    <property type="entry name" value="PRK07726.1"/>
    <property type="match status" value="1"/>
</dbReference>
<dbReference type="NCBIfam" id="TIGR01056">
    <property type="entry name" value="topB"/>
    <property type="match status" value="1"/>
</dbReference>
<dbReference type="PANTHER" id="PTHR11390:SF21">
    <property type="entry name" value="DNA TOPOISOMERASE 3-ALPHA"/>
    <property type="match status" value="1"/>
</dbReference>
<dbReference type="PANTHER" id="PTHR11390">
    <property type="entry name" value="PROKARYOTIC DNA TOPOISOMERASE"/>
    <property type="match status" value="1"/>
</dbReference>
<dbReference type="Pfam" id="PF01131">
    <property type="entry name" value="Topoisom_bac"/>
    <property type="match status" value="1"/>
</dbReference>
<dbReference type="Pfam" id="PF01751">
    <property type="entry name" value="Toprim"/>
    <property type="match status" value="1"/>
</dbReference>
<dbReference type="PRINTS" id="PR00417">
    <property type="entry name" value="PRTPISMRASEI"/>
</dbReference>
<dbReference type="SMART" id="SM00437">
    <property type="entry name" value="TOP1Ac"/>
    <property type="match status" value="1"/>
</dbReference>
<dbReference type="SMART" id="SM00436">
    <property type="entry name" value="TOP1Bc"/>
    <property type="match status" value="1"/>
</dbReference>
<dbReference type="SMART" id="SM00493">
    <property type="entry name" value="TOPRIM"/>
    <property type="match status" value="1"/>
</dbReference>
<dbReference type="SUPFAM" id="SSF56712">
    <property type="entry name" value="Prokaryotic type I DNA topoisomerase"/>
    <property type="match status" value="1"/>
</dbReference>
<dbReference type="PROSITE" id="PS00396">
    <property type="entry name" value="TOPO_IA_1"/>
    <property type="match status" value="1"/>
</dbReference>
<dbReference type="PROSITE" id="PS52039">
    <property type="entry name" value="TOPO_IA_2"/>
    <property type="match status" value="1"/>
</dbReference>
<dbReference type="PROSITE" id="PS50880">
    <property type="entry name" value="TOPRIM"/>
    <property type="match status" value="1"/>
</dbReference>
<organism>
    <name type="scientific">Bacillus licheniformis (strain ATCC 14580 / DSM 13 / JCM 2505 / CCUG 7422 / NBRC 12200 / NCIMB 9375 / NCTC 10341 / NRRL NRS-1264 / Gibson 46)</name>
    <dbReference type="NCBI Taxonomy" id="279010"/>
    <lineage>
        <taxon>Bacteria</taxon>
        <taxon>Bacillati</taxon>
        <taxon>Bacillota</taxon>
        <taxon>Bacilli</taxon>
        <taxon>Bacillales</taxon>
        <taxon>Bacillaceae</taxon>
        <taxon>Bacillus</taxon>
    </lineage>
</organism>
<name>TOP3_BACLD</name>
<keyword id="KW-0238">DNA-binding</keyword>
<keyword id="KW-0413">Isomerase</keyword>
<keyword id="KW-0460">Magnesium</keyword>
<keyword id="KW-0479">Metal-binding</keyword>
<keyword id="KW-1185">Reference proteome</keyword>
<keyword id="KW-0799">Topoisomerase</keyword>